<proteinExistence type="inferred from homology"/>
<keyword id="KW-0012">Acyltransferase</keyword>
<keyword id="KW-1185">Reference proteome</keyword>
<keyword id="KW-0677">Repeat</keyword>
<keyword id="KW-0808">Transferase</keyword>
<name>MSHD_PROFC</name>
<feature type="chain" id="PRO_0000400288" description="Mycothiol acetyltransferase">
    <location>
        <begin position="1"/>
        <end position="312"/>
    </location>
</feature>
<feature type="domain" description="N-acetyltransferase 1" evidence="1">
    <location>
        <begin position="8"/>
        <end position="136"/>
    </location>
</feature>
<feature type="domain" description="N-acetyltransferase 2" evidence="1">
    <location>
        <begin position="149"/>
        <end position="301"/>
    </location>
</feature>
<feature type="region of interest" description="Disordered" evidence="2">
    <location>
        <begin position="292"/>
        <end position="312"/>
    </location>
</feature>
<feature type="compositionally biased region" description="Basic and acidic residues" evidence="2">
    <location>
        <begin position="297"/>
        <end position="312"/>
    </location>
</feature>
<feature type="binding site" evidence="1">
    <location>
        <position position="38"/>
    </location>
    <ligand>
        <name>1D-myo-inositol 2-(L-cysteinylamino)-2-deoxy-alpha-D-glucopyranoside</name>
        <dbReference type="ChEBI" id="CHEBI:58887"/>
    </ligand>
</feature>
<feature type="binding site" evidence="1">
    <location>
        <begin position="77"/>
        <end position="79"/>
    </location>
    <ligand>
        <name>acetyl-CoA</name>
        <dbReference type="ChEBI" id="CHEBI:57288"/>
        <label>1</label>
    </ligand>
</feature>
<feature type="binding site" evidence="1">
    <location>
        <begin position="85"/>
        <end position="90"/>
    </location>
    <ligand>
        <name>acetyl-CoA</name>
        <dbReference type="ChEBI" id="CHEBI:57288"/>
        <label>1</label>
    </ligand>
</feature>
<feature type="binding site" evidence="1">
    <location>
        <position position="175"/>
    </location>
    <ligand>
        <name>1D-myo-inositol 2-(L-cysteinylamino)-2-deoxy-alpha-D-glucopyranoside</name>
        <dbReference type="ChEBI" id="CHEBI:58887"/>
    </ligand>
</feature>
<feature type="binding site" evidence="1">
    <location>
        <position position="215"/>
    </location>
    <ligand>
        <name>1D-myo-inositol 2-(L-cysteinylamino)-2-deoxy-alpha-D-glucopyranoside</name>
        <dbReference type="ChEBI" id="CHEBI:58887"/>
    </ligand>
</feature>
<feature type="binding site" evidence="1">
    <location>
        <position position="226"/>
    </location>
    <ligand>
        <name>1D-myo-inositol 2-(L-cysteinylamino)-2-deoxy-alpha-D-glucopyranoside</name>
        <dbReference type="ChEBI" id="CHEBI:58887"/>
    </ligand>
</feature>
<feature type="binding site" evidence="1">
    <location>
        <begin position="230"/>
        <end position="232"/>
    </location>
    <ligand>
        <name>acetyl-CoA</name>
        <dbReference type="ChEBI" id="CHEBI:57288"/>
        <label>2</label>
    </ligand>
</feature>
<feature type="binding site" evidence="1">
    <location>
        <begin position="237"/>
        <end position="243"/>
    </location>
    <ligand>
        <name>acetyl-CoA</name>
        <dbReference type="ChEBI" id="CHEBI:57288"/>
        <label>2</label>
    </ligand>
</feature>
<feature type="binding site" evidence="1">
    <location>
        <position position="264"/>
    </location>
    <ligand>
        <name>1D-myo-inositol 2-(L-cysteinylamino)-2-deoxy-alpha-D-glucopyranoside</name>
        <dbReference type="ChEBI" id="CHEBI:58887"/>
    </ligand>
</feature>
<feature type="binding site" evidence="1">
    <location>
        <begin position="269"/>
        <end position="274"/>
    </location>
    <ligand>
        <name>acetyl-CoA</name>
        <dbReference type="ChEBI" id="CHEBI:57288"/>
        <label>2</label>
    </ligand>
</feature>
<accession>D7GG24</accession>
<comment type="function">
    <text evidence="1">Catalyzes the transfer of acetyl from acetyl-CoA to desacetylmycothiol (Cys-GlcN-Ins) to form mycothiol.</text>
</comment>
<comment type="catalytic activity">
    <reaction evidence="1">
        <text>1D-myo-inositol 2-(L-cysteinylamino)-2-deoxy-alpha-D-glucopyranoside + acetyl-CoA = mycothiol + CoA + H(+)</text>
        <dbReference type="Rhea" id="RHEA:26172"/>
        <dbReference type="ChEBI" id="CHEBI:15378"/>
        <dbReference type="ChEBI" id="CHEBI:16768"/>
        <dbReference type="ChEBI" id="CHEBI:57287"/>
        <dbReference type="ChEBI" id="CHEBI:57288"/>
        <dbReference type="ChEBI" id="CHEBI:58887"/>
        <dbReference type="EC" id="2.3.1.189"/>
    </reaction>
</comment>
<comment type="subunit">
    <text evidence="1">Monomer.</text>
</comment>
<comment type="similarity">
    <text evidence="1">Belongs to the acetyltransferase family. MshD subfamily.</text>
</comment>
<evidence type="ECO:0000255" key="1">
    <source>
        <dbReference type="HAMAP-Rule" id="MF_01698"/>
    </source>
</evidence>
<evidence type="ECO:0000256" key="2">
    <source>
        <dbReference type="SAM" id="MobiDB-lite"/>
    </source>
</evidence>
<sequence>MNPVVTGPIIRLSADDRDHIADLVRACTEHDGVSPLNESGWFGLQGLTASHTHWIARDGKQVVGYAQADAREHTVQLMVAPPARRQGIATTLAKAAWQLHPAMWWSFGDCPGARELATQLGLREVRKLLKMSLPMPADQPHDAHLPEGLRLDHFRDDDLDQLVAVNHAAFVHHPEQGAMTAEDARNRMAQDWFDPAGLLVARDEAGTLVGFHWTKVADEDGRPRGEVYVLGVDPDFEGKGVGRALLDAGILHMRELGVEAIDLYVEGANERVVHMYERAGFSVVSTDVGYAPAKPARHQDHGRQSSPQERDA</sequence>
<reference key="1">
    <citation type="journal article" date="2010" name="PLoS ONE">
        <title>The complete genome of Propionibacterium freudenreichii CIRM-BIA1, a hardy actinobacterium with food and probiotic applications.</title>
        <authorList>
            <person name="Falentin H."/>
            <person name="Deutsch S.M."/>
            <person name="Jan G."/>
            <person name="Loux V."/>
            <person name="Thierry A."/>
            <person name="Parayre S."/>
            <person name="Maillard M.B."/>
            <person name="Dherbecourt J."/>
            <person name="Cousin F.J."/>
            <person name="Jardin J."/>
            <person name="Siguier P."/>
            <person name="Couloux A."/>
            <person name="Barbe V."/>
            <person name="Vacherie B."/>
            <person name="Wincker P."/>
            <person name="Gibrat J.F."/>
            <person name="Gaillardin C."/>
            <person name="Lortal S."/>
        </authorList>
    </citation>
    <scope>NUCLEOTIDE SEQUENCE [LARGE SCALE GENOMIC DNA]</scope>
    <source>
        <strain>ATCC 9614 / DSM 4902 / CIP 103027 / NCIMB 8099 / CIRM-BIA1</strain>
    </source>
</reference>
<gene>
    <name evidence="1" type="primary">mshD</name>
    <name type="ordered locus">PFREUD_19920</name>
</gene>
<organism>
    <name type="scientific">Propionibacterium freudenreichii subsp. shermanii (strain ATCC 9614 / DSM 4902 / CIP 103027 / NCIMB 8099 / CIRM-BIA1)</name>
    <dbReference type="NCBI Taxonomy" id="754252"/>
    <lineage>
        <taxon>Bacteria</taxon>
        <taxon>Bacillati</taxon>
        <taxon>Actinomycetota</taxon>
        <taxon>Actinomycetes</taxon>
        <taxon>Propionibacteriales</taxon>
        <taxon>Propionibacteriaceae</taxon>
        <taxon>Propionibacterium</taxon>
    </lineage>
</organism>
<protein>
    <recommendedName>
        <fullName evidence="1">Mycothiol acetyltransferase</fullName>
        <shortName evidence="1">MSH acetyltransferase</shortName>
        <ecNumber evidence="1">2.3.1.189</ecNumber>
    </recommendedName>
    <alternativeName>
        <fullName evidence="1">Mycothiol synthase</fullName>
    </alternativeName>
</protein>
<dbReference type="EC" id="2.3.1.189" evidence="1"/>
<dbReference type="EMBL" id="FN806773">
    <property type="protein sequence ID" value="CBL57485.1"/>
    <property type="molecule type" value="Genomic_DNA"/>
</dbReference>
<dbReference type="SMR" id="D7GG24"/>
<dbReference type="STRING" id="754252.PFREUD_19920"/>
<dbReference type="KEGG" id="pfr:PFREUD_19920"/>
<dbReference type="eggNOG" id="COG0456">
    <property type="taxonomic scope" value="Bacteria"/>
</dbReference>
<dbReference type="HOGENOM" id="CLU_068014_0_0_11"/>
<dbReference type="Proteomes" id="UP000000936">
    <property type="component" value="Chromosome"/>
</dbReference>
<dbReference type="GO" id="GO:0035447">
    <property type="term" value="F:mycothiol synthase activity"/>
    <property type="evidence" value="ECO:0007669"/>
    <property type="project" value="UniProtKB-UniRule"/>
</dbReference>
<dbReference type="GO" id="GO:0010125">
    <property type="term" value="P:mycothiol biosynthetic process"/>
    <property type="evidence" value="ECO:0007669"/>
    <property type="project" value="UniProtKB-UniRule"/>
</dbReference>
<dbReference type="CDD" id="cd04301">
    <property type="entry name" value="NAT_SF"/>
    <property type="match status" value="2"/>
</dbReference>
<dbReference type="Gene3D" id="3.40.630.30">
    <property type="match status" value="1"/>
</dbReference>
<dbReference type="HAMAP" id="MF_01698">
    <property type="entry name" value="MshD"/>
    <property type="match status" value="1"/>
</dbReference>
<dbReference type="InterPro" id="IPR016181">
    <property type="entry name" value="Acyl_CoA_acyltransferase"/>
</dbReference>
<dbReference type="InterPro" id="IPR050832">
    <property type="entry name" value="Bact_Acetyltransf"/>
</dbReference>
<dbReference type="InterPro" id="IPR000182">
    <property type="entry name" value="GNAT_dom"/>
</dbReference>
<dbReference type="InterPro" id="IPR017813">
    <property type="entry name" value="Mycothiol_AcTrfase"/>
</dbReference>
<dbReference type="NCBIfam" id="TIGR03448">
    <property type="entry name" value="mycothiol_MshD"/>
    <property type="match status" value="1"/>
</dbReference>
<dbReference type="PANTHER" id="PTHR43877">
    <property type="entry name" value="AMINOALKYLPHOSPHONATE N-ACETYLTRANSFERASE-RELATED-RELATED"/>
    <property type="match status" value="1"/>
</dbReference>
<dbReference type="Pfam" id="PF00583">
    <property type="entry name" value="Acetyltransf_1"/>
    <property type="match status" value="1"/>
</dbReference>
<dbReference type="Pfam" id="PF13508">
    <property type="entry name" value="Acetyltransf_7"/>
    <property type="match status" value="1"/>
</dbReference>
<dbReference type="PIRSF" id="PIRSF021524">
    <property type="entry name" value="MSH_acetyltransferase"/>
    <property type="match status" value="1"/>
</dbReference>
<dbReference type="SUPFAM" id="SSF55729">
    <property type="entry name" value="Acyl-CoA N-acyltransferases (Nat)"/>
    <property type="match status" value="1"/>
</dbReference>
<dbReference type="PROSITE" id="PS51186">
    <property type="entry name" value="GNAT"/>
    <property type="match status" value="2"/>
</dbReference>